<protein>
    <recommendedName>
        <fullName evidence="1">Elongation factor P-like protein</fullName>
    </recommendedName>
</protein>
<gene>
    <name type="ordered locus">PSHAa0969</name>
</gene>
<feature type="chain" id="PRO_0000259898" description="Elongation factor P-like protein">
    <location>
        <begin position="1"/>
        <end position="190"/>
    </location>
</feature>
<accession>Q3IEF7</accession>
<comment type="similarity">
    <text evidence="1">Belongs to the elongation factor P family.</text>
</comment>
<evidence type="ECO:0000255" key="1">
    <source>
        <dbReference type="HAMAP-Rule" id="MF_00646"/>
    </source>
</evidence>
<name>EFPL_PSET1</name>
<dbReference type="EMBL" id="CR954246">
    <property type="protein sequence ID" value="CAI86047.1"/>
    <property type="molecule type" value="Genomic_DNA"/>
</dbReference>
<dbReference type="SMR" id="Q3IEF7"/>
<dbReference type="STRING" id="326442.PSHAa0969"/>
<dbReference type="KEGG" id="pha:PSHAa0969"/>
<dbReference type="PATRIC" id="fig|326442.8.peg.929"/>
<dbReference type="eggNOG" id="COG0231">
    <property type="taxonomic scope" value="Bacteria"/>
</dbReference>
<dbReference type="HOGENOM" id="CLU_074944_2_0_6"/>
<dbReference type="BioCyc" id="PHAL326442:PSHA_RS04725-MONOMER"/>
<dbReference type="Proteomes" id="UP000006843">
    <property type="component" value="Chromosome I"/>
</dbReference>
<dbReference type="GO" id="GO:0005737">
    <property type="term" value="C:cytoplasm"/>
    <property type="evidence" value="ECO:0007669"/>
    <property type="project" value="InterPro"/>
</dbReference>
<dbReference type="GO" id="GO:0003746">
    <property type="term" value="F:translation elongation factor activity"/>
    <property type="evidence" value="ECO:0007669"/>
    <property type="project" value="UniProtKB-UniRule"/>
</dbReference>
<dbReference type="GO" id="GO:0043043">
    <property type="term" value="P:peptide biosynthetic process"/>
    <property type="evidence" value="ECO:0007669"/>
    <property type="project" value="InterPro"/>
</dbReference>
<dbReference type="CDD" id="cd04470">
    <property type="entry name" value="S1_EF-P_repeat_1"/>
    <property type="match status" value="1"/>
</dbReference>
<dbReference type="FunFam" id="2.40.50.140:FF:000004">
    <property type="entry name" value="Elongation factor P"/>
    <property type="match status" value="1"/>
</dbReference>
<dbReference type="Gene3D" id="2.30.30.30">
    <property type="match status" value="1"/>
</dbReference>
<dbReference type="Gene3D" id="2.40.50.140">
    <property type="entry name" value="Nucleic acid-binding proteins"/>
    <property type="match status" value="2"/>
</dbReference>
<dbReference type="HAMAP" id="MF_00646">
    <property type="entry name" value="EFP"/>
    <property type="match status" value="1"/>
</dbReference>
<dbReference type="InterPro" id="IPR015365">
    <property type="entry name" value="Elong-fact-P_C"/>
</dbReference>
<dbReference type="InterPro" id="IPR012340">
    <property type="entry name" value="NA-bd_OB-fold"/>
</dbReference>
<dbReference type="InterPro" id="IPR014722">
    <property type="entry name" value="Rib_uL2_dom2"/>
</dbReference>
<dbReference type="InterPro" id="IPR020599">
    <property type="entry name" value="Transl_elong_fac_P/YeiP"/>
</dbReference>
<dbReference type="InterPro" id="IPR013185">
    <property type="entry name" value="Transl_elong_KOW-like"/>
</dbReference>
<dbReference type="InterPro" id="IPR011897">
    <property type="entry name" value="Transl_elong_p-like_YeiP"/>
</dbReference>
<dbReference type="InterPro" id="IPR001059">
    <property type="entry name" value="Transl_elong_P/YeiP_cen"/>
</dbReference>
<dbReference type="InterPro" id="IPR013852">
    <property type="entry name" value="Transl_elong_P/YeiP_CS"/>
</dbReference>
<dbReference type="InterPro" id="IPR008991">
    <property type="entry name" value="Translation_prot_SH3-like_sf"/>
</dbReference>
<dbReference type="NCBIfam" id="NF003392">
    <property type="entry name" value="PRK04542.1"/>
    <property type="match status" value="1"/>
</dbReference>
<dbReference type="NCBIfam" id="TIGR02178">
    <property type="entry name" value="yeiP"/>
    <property type="match status" value="1"/>
</dbReference>
<dbReference type="PANTHER" id="PTHR30053">
    <property type="entry name" value="ELONGATION FACTOR P"/>
    <property type="match status" value="1"/>
</dbReference>
<dbReference type="PANTHER" id="PTHR30053:SF14">
    <property type="entry name" value="TRANSLATION ELONGATION FACTOR KOW-LIKE DOMAIN-CONTAINING PROTEIN"/>
    <property type="match status" value="1"/>
</dbReference>
<dbReference type="Pfam" id="PF01132">
    <property type="entry name" value="EFP"/>
    <property type="match status" value="1"/>
</dbReference>
<dbReference type="Pfam" id="PF08207">
    <property type="entry name" value="EFP_N"/>
    <property type="match status" value="1"/>
</dbReference>
<dbReference type="Pfam" id="PF09285">
    <property type="entry name" value="Elong-fact-P_C"/>
    <property type="match status" value="1"/>
</dbReference>
<dbReference type="PIRSF" id="PIRSF005901">
    <property type="entry name" value="EF-P"/>
    <property type="match status" value="1"/>
</dbReference>
<dbReference type="SMART" id="SM01185">
    <property type="entry name" value="EFP"/>
    <property type="match status" value="1"/>
</dbReference>
<dbReference type="SMART" id="SM00841">
    <property type="entry name" value="Elong-fact-P_C"/>
    <property type="match status" value="1"/>
</dbReference>
<dbReference type="SUPFAM" id="SSF50249">
    <property type="entry name" value="Nucleic acid-binding proteins"/>
    <property type="match status" value="2"/>
</dbReference>
<dbReference type="SUPFAM" id="SSF50104">
    <property type="entry name" value="Translation proteins SH3-like domain"/>
    <property type="match status" value="1"/>
</dbReference>
<dbReference type="PROSITE" id="PS01275">
    <property type="entry name" value="EFP"/>
    <property type="match status" value="1"/>
</dbReference>
<proteinExistence type="inferred from homology"/>
<sequence length="190" mass="20871">MPKASEVKKGTAIDFNGRVLVVKDIVRSVPQGRAGGSLYRMRLYDVVTGSKVDETFKDSDMLTLADLTRREAMLSYIDGDEYVFMDNEDYTPYNLSKDAISEEILFVNEETQGVHVIVIDGAPVGLDLPSSVELVVEETDPSIKGASASARSKPARMSTGLNISVPEHISTGDRIRINTAEHKFMGRAEK</sequence>
<keyword id="KW-1185">Reference proteome</keyword>
<organism>
    <name type="scientific">Pseudoalteromonas translucida (strain TAC 125)</name>
    <dbReference type="NCBI Taxonomy" id="326442"/>
    <lineage>
        <taxon>Bacteria</taxon>
        <taxon>Pseudomonadati</taxon>
        <taxon>Pseudomonadota</taxon>
        <taxon>Gammaproteobacteria</taxon>
        <taxon>Alteromonadales</taxon>
        <taxon>Pseudoalteromonadaceae</taxon>
        <taxon>Pseudoalteromonas</taxon>
    </lineage>
</organism>
<reference key="1">
    <citation type="journal article" date="2005" name="Genome Res.">
        <title>Coping with cold: the genome of the versatile marine Antarctica bacterium Pseudoalteromonas haloplanktis TAC125.</title>
        <authorList>
            <person name="Medigue C."/>
            <person name="Krin E."/>
            <person name="Pascal G."/>
            <person name="Barbe V."/>
            <person name="Bernsel A."/>
            <person name="Bertin P.N."/>
            <person name="Cheung F."/>
            <person name="Cruveiller S."/>
            <person name="D'Amico S."/>
            <person name="Duilio A."/>
            <person name="Fang G."/>
            <person name="Feller G."/>
            <person name="Ho C."/>
            <person name="Mangenot S."/>
            <person name="Marino G."/>
            <person name="Nilsson J."/>
            <person name="Parrilli E."/>
            <person name="Rocha E.P.C."/>
            <person name="Rouy Z."/>
            <person name="Sekowska A."/>
            <person name="Tutino M.L."/>
            <person name="Vallenet D."/>
            <person name="von Heijne G."/>
            <person name="Danchin A."/>
        </authorList>
    </citation>
    <scope>NUCLEOTIDE SEQUENCE [LARGE SCALE GENOMIC DNA]</scope>
    <source>
        <strain>TAC 125</strain>
    </source>
</reference>